<sequence>MELIVKDAQSALTVSETTFGRDFNEALVHQVVVAYAAGARQGTRAQKTRAEVTGSGKKPWRQKGTGRARAGSVKSPIWRSGGVTFAAKPQDHSQKVNKKMYRGALKSILSELVRQDRLIIVEKFSVEAPKTKLLAQKLKDMALEDVLIITGELDENLFLAARNLYKVDVRDVAGIDPVSLIAFDKVVMTADAVKQVEEMLA</sequence>
<protein>
    <recommendedName>
        <fullName evidence="1">Large ribosomal subunit protein uL4</fullName>
    </recommendedName>
    <alternativeName>
        <fullName evidence="3">50S ribosomal protein L4</fullName>
    </alternativeName>
</protein>
<reference key="1">
    <citation type="journal article" date="2006" name="PLoS Genet.">
        <title>The complete genome sequence and comparative genome analysis of the high pathogenicity Yersinia enterocolitica strain 8081.</title>
        <authorList>
            <person name="Thomson N.R."/>
            <person name="Howard S."/>
            <person name="Wren B.W."/>
            <person name="Holden M.T.G."/>
            <person name="Crossman L."/>
            <person name="Challis G.L."/>
            <person name="Churcher C."/>
            <person name="Mungall K."/>
            <person name="Brooks K."/>
            <person name="Chillingworth T."/>
            <person name="Feltwell T."/>
            <person name="Abdellah Z."/>
            <person name="Hauser H."/>
            <person name="Jagels K."/>
            <person name="Maddison M."/>
            <person name="Moule S."/>
            <person name="Sanders M."/>
            <person name="Whitehead S."/>
            <person name="Quail M.A."/>
            <person name="Dougan G."/>
            <person name="Parkhill J."/>
            <person name="Prentice M.B."/>
        </authorList>
    </citation>
    <scope>NUCLEOTIDE SEQUENCE [LARGE SCALE GENOMIC DNA]</scope>
    <source>
        <strain>NCTC 13174 / 8081</strain>
    </source>
</reference>
<keyword id="KW-0687">Ribonucleoprotein</keyword>
<keyword id="KW-0689">Ribosomal protein</keyword>
<keyword id="KW-0694">RNA-binding</keyword>
<keyword id="KW-0699">rRNA-binding</keyword>
<accession>A1JS46</accession>
<name>RL4_YERE8</name>
<evidence type="ECO:0000255" key="1">
    <source>
        <dbReference type="HAMAP-Rule" id="MF_01328"/>
    </source>
</evidence>
<evidence type="ECO:0000256" key="2">
    <source>
        <dbReference type="SAM" id="MobiDB-lite"/>
    </source>
</evidence>
<evidence type="ECO:0000305" key="3"/>
<comment type="function">
    <text evidence="1">One of the primary rRNA binding proteins, this protein initially binds near the 5'-end of the 23S rRNA. It is important during the early stages of 50S assembly. It makes multiple contacts with different domains of the 23S rRNA in the assembled 50S subunit and ribosome.</text>
</comment>
<comment type="function">
    <text evidence="1">Forms part of the polypeptide exit tunnel.</text>
</comment>
<comment type="subunit">
    <text evidence="1">Part of the 50S ribosomal subunit.</text>
</comment>
<comment type="similarity">
    <text evidence="1">Belongs to the universal ribosomal protein uL4 family.</text>
</comment>
<feature type="chain" id="PRO_1000052527" description="Large ribosomal subunit protein uL4">
    <location>
        <begin position="1"/>
        <end position="201"/>
    </location>
</feature>
<feature type="region of interest" description="Disordered" evidence="2">
    <location>
        <begin position="45"/>
        <end position="67"/>
    </location>
</feature>
<proteinExistence type="inferred from homology"/>
<organism>
    <name type="scientific">Yersinia enterocolitica serotype O:8 / biotype 1B (strain NCTC 13174 / 8081)</name>
    <dbReference type="NCBI Taxonomy" id="393305"/>
    <lineage>
        <taxon>Bacteria</taxon>
        <taxon>Pseudomonadati</taxon>
        <taxon>Pseudomonadota</taxon>
        <taxon>Gammaproteobacteria</taxon>
        <taxon>Enterobacterales</taxon>
        <taxon>Yersiniaceae</taxon>
        <taxon>Yersinia</taxon>
    </lineage>
</organism>
<dbReference type="EMBL" id="AM286415">
    <property type="protein sequence ID" value="CAL13941.1"/>
    <property type="molecule type" value="Genomic_DNA"/>
</dbReference>
<dbReference type="RefSeq" id="WP_005174626.1">
    <property type="nucleotide sequence ID" value="NC_008800.1"/>
</dbReference>
<dbReference type="RefSeq" id="YP_001008067.1">
    <property type="nucleotide sequence ID" value="NC_008800.1"/>
</dbReference>
<dbReference type="SMR" id="A1JS46"/>
<dbReference type="KEGG" id="yen:YE3922"/>
<dbReference type="PATRIC" id="fig|393305.7.peg.4172"/>
<dbReference type="eggNOG" id="COG0088">
    <property type="taxonomic scope" value="Bacteria"/>
</dbReference>
<dbReference type="HOGENOM" id="CLU_041575_5_2_6"/>
<dbReference type="OrthoDB" id="9803201at2"/>
<dbReference type="Proteomes" id="UP000000642">
    <property type="component" value="Chromosome"/>
</dbReference>
<dbReference type="GO" id="GO:1990904">
    <property type="term" value="C:ribonucleoprotein complex"/>
    <property type="evidence" value="ECO:0007669"/>
    <property type="project" value="UniProtKB-KW"/>
</dbReference>
<dbReference type="GO" id="GO:0005840">
    <property type="term" value="C:ribosome"/>
    <property type="evidence" value="ECO:0007669"/>
    <property type="project" value="UniProtKB-KW"/>
</dbReference>
<dbReference type="GO" id="GO:0019843">
    <property type="term" value="F:rRNA binding"/>
    <property type="evidence" value="ECO:0007669"/>
    <property type="project" value="UniProtKB-UniRule"/>
</dbReference>
<dbReference type="GO" id="GO:0003735">
    <property type="term" value="F:structural constituent of ribosome"/>
    <property type="evidence" value="ECO:0007669"/>
    <property type="project" value="InterPro"/>
</dbReference>
<dbReference type="GO" id="GO:0006412">
    <property type="term" value="P:translation"/>
    <property type="evidence" value="ECO:0007669"/>
    <property type="project" value="UniProtKB-UniRule"/>
</dbReference>
<dbReference type="FunFam" id="3.40.1370.10:FF:000001">
    <property type="entry name" value="50S ribosomal protein L4"/>
    <property type="match status" value="1"/>
</dbReference>
<dbReference type="Gene3D" id="3.40.1370.10">
    <property type="match status" value="1"/>
</dbReference>
<dbReference type="HAMAP" id="MF_01328_B">
    <property type="entry name" value="Ribosomal_uL4_B"/>
    <property type="match status" value="1"/>
</dbReference>
<dbReference type="InterPro" id="IPR002136">
    <property type="entry name" value="Ribosomal_uL4"/>
</dbReference>
<dbReference type="InterPro" id="IPR013005">
    <property type="entry name" value="Ribosomal_uL4-like"/>
</dbReference>
<dbReference type="InterPro" id="IPR023574">
    <property type="entry name" value="Ribosomal_uL4_dom_sf"/>
</dbReference>
<dbReference type="NCBIfam" id="TIGR03953">
    <property type="entry name" value="rplD_bact"/>
    <property type="match status" value="1"/>
</dbReference>
<dbReference type="PANTHER" id="PTHR10746">
    <property type="entry name" value="50S RIBOSOMAL PROTEIN L4"/>
    <property type="match status" value="1"/>
</dbReference>
<dbReference type="PANTHER" id="PTHR10746:SF6">
    <property type="entry name" value="LARGE RIBOSOMAL SUBUNIT PROTEIN UL4M"/>
    <property type="match status" value="1"/>
</dbReference>
<dbReference type="Pfam" id="PF00573">
    <property type="entry name" value="Ribosomal_L4"/>
    <property type="match status" value="1"/>
</dbReference>
<dbReference type="SUPFAM" id="SSF52166">
    <property type="entry name" value="Ribosomal protein L4"/>
    <property type="match status" value="1"/>
</dbReference>
<gene>
    <name evidence="1" type="primary">rplD</name>
    <name type="ordered locus">YE3922</name>
</gene>